<comment type="function">
    <text>Involved in xanthan production.</text>
</comment>
<comment type="catalytic activity">
    <reaction>
        <text>D-mannose 6-phosphate = D-fructose 6-phosphate</text>
        <dbReference type="Rhea" id="RHEA:12356"/>
        <dbReference type="ChEBI" id="CHEBI:58735"/>
        <dbReference type="ChEBI" id="CHEBI:61527"/>
        <dbReference type="EC" id="5.3.1.8"/>
    </reaction>
</comment>
<comment type="catalytic activity">
    <reaction>
        <text>alpha-D-mannose 1-phosphate + GTP + H(+) = GDP-alpha-D-mannose + diphosphate</text>
        <dbReference type="Rhea" id="RHEA:15229"/>
        <dbReference type="ChEBI" id="CHEBI:15378"/>
        <dbReference type="ChEBI" id="CHEBI:33019"/>
        <dbReference type="ChEBI" id="CHEBI:37565"/>
        <dbReference type="ChEBI" id="CHEBI:57527"/>
        <dbReference type="ChEBI" id="CHEBI:58409"/>
        <dbReference type="EC" id="2.7.7.13"/>
    </reaction>
</comment>
<comment type="pathway">
    <text>Nucleotide-sugar biosynthesis; GDP-alpha-D-mannose biosynthesis; GDP-alpha-D-mannose from alpha-D-mannose 1-phosphate (GTP route): step 1/1.</text>
</comment>
<comment type="pathway">
    <text>Nucleotide-sugar biosynthesis; GDP-alpha-D-mannose biosynthesis; alpha-D-mannose 1-phosphate from D-fructose 6-phosphate: step 1/2.</text>
</comment>
<comment type="similarity">
    <text evidence="1">Belongs to the mannose-6-phosphate isomerase type 2 family.</text>
</comment>
<protein>
    <recommendedName>
        <fullName>Xanthan biosynthesis protein XanB</fullName>
    </recommendedName>
    <domain>
        <recommendedName>
            <fullName>Mannose-6-phosphate isomerase</fullName>
            <ecNumber>5.3.1.8</ecNumber>
        </recommendedName>
        <alternativeName>
            <fullName>Phosphohexomutase</fullName>
        </alternativeName>
        <alternativeName>
            <fullName>Phosphomannose isomerase</fullName>
            <shortName>PMI</shortName>
        </alternativeName>
    </domain>
    <domain>
        <recommendedName>
            <fullName>Mannose-1-phosphate guanylyl transferase</fullName>
            <ecNumber>2.7.7.13</ecNumber>
        </recommendedName>
        <alternativeName>
            <fullName>GDP-mannose pyrophosphorylase</fullName>
            <shortName>GMP</shortName>
            <shortName>GMPP</shortName>
        </alternativeName>
    </domain>
</protein>
<keyword id="KW-0270">Exopolysaccharide synthesis</keyword>
<keyword id="KW-0342">GTP-binding</keyword>
<keyword id="KW-0413">Isomerase</keyword>
<keyword id="KW-0448">Lipopolysaccharide biosynthesis</keyword>
<keyword id="KW-0511">Multifunctional enzyme</keyword>
<keyword id="KW-0547">Nucleotide-binding</keyword>
<keyword id="KW-0548">Nucleotidyltransferase</keyword>
<keyword id="KW-0808">Transferase</keyword>
<feature type="chain" id="PRO_0000333187" description="Xanthan biosynthesis protein XanB">
    <location>
        <begin position="1"/>
        <end position="467"/>
    </location>
</feature>
<accession>B0RVK6</accession>
<accession>P29956</accession>
<accession>Q93S98</accession>
<proteinExistence type="inferred from homology"/>
<evidence type="ECO:0000305" key="1"/>
<organism>
    <name type="scientific">Xanthomonas campestris pv. campestris (strain B100)</name>
    <dbReference type="NCBI Taxonomy" id="509169"/>
    <lineage>
        <taxon>Bacteria</taxon>
        <taxon>Pseudomonadati</taxon>
        <taxon>Pseudomonadota</taxon>
        <taxon>Gammaproteobacteria</taxon>
        <taxon>Lysobacterales</taxon>
        <taxon>Lysobacteraceae</taxon>
        <taxon>Xanthomonas</taxon>
    </lineage>
</organism>
<sequence length="467" mass="50934">MSDVLPIILSGGSGTRLWPLSRETYPKQFLPLVGEHSMLQATWLRSAPVAAHAPIVVANEEHRFMAAEQLQQLGVKPSAILLEPKGRNTAPAIAVAALEATRNGGDPLLLVLPSDHVIRDEAAFQAAVTVAAAAAEQGKLVTFGIKPTAPETGYGYIKAGAGTGATAVERFVEKPDLATAQGYLASGEYYWNSGMFLFRASRYLEELRKFQPAIADACQKAWEGGKRDADFTRLDKDAFASSPSDSIDYAVMEKTADAVVVPLDAGWNDVGSWSSLLDVSEQDGQGNAHHGDVIQLDCKNTYAYGSRLIAMVGLENVVVVETDDAVLVGHRDRIQEVKEVVSQIKSAGRSEATWHRKVYRPWGAYDSIDMGQRFQVKRITVKPGATLSLQMHHHRAEHWIVVSGTAEVTRGDEVLLLTENQSTYIPLGVTHRLKNPGKLPLELIEVQSGSYLGEDDIVRFEDTYGRT</sequence>
<name>XANB_XANCB</name>
<gene>
    <name type="primary">xanB</name>
    <name type="ordered locus">xcc-b100_3730</name>
</gene>
<reference key="1">
    <citation type="journal article" date="1992" name="J. Bacteriol.">
        <title>Genetics of xanthan production in Xanthomonas campestris: the xanA and xanB genes are involved in UDP-glucose and GDP-mannose biosynthesis.</title>
        <authorList>
            <person name="Koeplin R."/>
            <person name="Arnold W."/>
            <person name="Hoette B."/>
            <person name="Simon R."/>
            <person name="Wang G."/>
            <person name="Puehler A."/>
        </authorList>
    </citation>
    <scope>NUCLEOTIDE SEQUENCE [GENOMIC DNA]</scope>
</reference>
<reference key="2">
    <citation type="journal article" date="2001" name="Mol. Genet. Genomics">
        <title>Lipopolysaccharide biosynthesis in Xanthomonas campestris pv. campestris: a cluster of 15 genes is involved in the biosynthesis of the LPS O-antigen and the LPS core.</title>
        <authorList>
            <person name="Vorhoelter F.-J."/>
            <person name="Niehaus K."/>
            <person name="Puehler A."/>
        </authorList>
    </citation>
    <scope>SEQUENCE REVISION TO 164</scope>
</reference>
<reference key="3">
    <citation type="journal article" date="2008" name="J. Biotechnol.">
        <title>The genome of Xanthomonas campestris pv. campestris B100 and its use for the reconstruction of metabolic pathways involved in xanthan biosynthesis.</title>
        <authorList>
            <person name="Vorhoelter F.-J."/>
            <person name="Schneiker S."/>
            <person name="Goesmann A."/>
            <person name="Krause L."/>
            <person name="Bekel T."/>
            <person name="Kaiser O."/>
            <person name="Linke B."/>
            <person name="Patschkowski T."/>
            <person name="Rueckert C."/>
            <person name="Schmid J."/>
            <person name="Sidhu V.K."/>
            <person name="Sieber V."/>
            <person name="Tauch A."/>
            <person name="Watt S.A."/>
            <person name="Weisshaar B."/>
            <person name="Becker A."/>
            <person name="Niehaus K."/>
            <person name="Puehler A."/>
        </authorList>
    </citation>
    <scope>NUCLEOTIDE SEQUENCE [LARGE SCALE GENOMIC DNA]</scope>
    <source>
        <strain>B100</strain>
    </source>
</reference>
<dbReference type="EC" id="5.3.1.8"/>
<dbReference type="EC" id="2.7.7.13"/>
<dbReference type="EMBL" id="AF204145">
    <property type="protein sequence ID" value="AAK53463.1"/>
    <property type="molecule type" value="Genomic_DNA"/>
</dbReference>
<dbReference type="EMBL" id="AM920689">
    <property type="protein sequence ID" value="CAP53097.1"/>
    <property type="molecule type" value="Genomic_DNA"/>
</dbReference>
<dbReference type="PIR" id="B43304">
    <property type="entry name" value="B43304"/>
</dbReference>
<dbReference type="SMR" id="B0RVK6"/>
<dbReference type="KEGG" id="xca:xcc-b100_3730"/>
<dbReference type="HOGENOM" id="CLU_035527_1_0_6"/>
<dbReference type="UniPathway" id="UPA00126">
    <property type="reaction ID" value="UER00423"/>
</dbReference>
<dbReference type="UniPathway" id="UPA00126">
    <property type="reaction ID" value="UER00930"/>
</dbReference>
<dbReference type="Proteomes" id="UP000001188">
    <property type="component" value="Chromosome"/>
</dbReference>
<dbReference type="GO" id="GO:0005525">
    <property type="term" value="F:GTP binding"/>
    <property type="evidence" value="ECO:0007669"/>
    <property type="project" value="UniProtKB-KW"/>
</dbReference>
<dbReference type="GO" id="GO:0004475">
    <property type="term" value="F:mannose-1-phosphate guanylyltransferase (GTP) activity"/>
    <property type="evidence" value="ECO:0007669"/>
    <property type="project" value="UniProtKB-EC"/>
</dbReference>
<dbReference type="GO" id="GO:0004476">
    <property type="term" value="F:mannose-6-phosphate isomerase activity"/>
    <property type="evidence" value="ECO:0007669"/>
    <property type="project" value="UniProtKB-EC"/>
</dbReference>
<dbReference type="GO" id="GO:0009298">
    <property type="term" value="P:GDP-mannose biosynthetic process"/>
    <property type="evidence" value="ECO:0007669"/>
    <property type="project" value="UniProtKB-UniPathway"/>
</dbReference>
<dbReference type="GO" id="GO:0009103">
    <property type="term" value="P:lipopolysaccharide biosynthetic process"/>
    <property type="evidence" value="ECO:0007669"/>
    <property type="project" value="UniProtKB-KW"/>
</dbReference>
<dbReference type="CDD" id="cd02213">
    <property type="entry name" value="cupin_PMI_typeII_C"/>
    <property type="match status" value="1"/>
</dbReference>
<dbReference type="CDD" id="cd02509">
    <property type="entry name" value="GDP-M1P_Guanylyltransferase"/>
    <property type="match status" value="1"/>
</dbReference>
<dbReference type="FunFam" id="3.90.550.10:FF:000046">
    <property type="entry name" value="Mannose-1-phosphate guanylyltransferase (GDP)"/>
    <property type="match status" value="1"/>
</dbReference>
<dbReference type="FunFam" id="2.60.120.10:FF:000032">
    <property type="entry name" value="Mannose-1-phosphate guanylyltransferase/mannose-6-phosphate isomerase"/>
    <property type="match status" value="1"/>
</dbReference>
<dbReference type="Gene3D" id="2.60.120.10">
    <property type="entry name" value="Jelly Rolls"/>
    <property type="match status" value="1"/>
</dbReference>
<dbReference type="Gene3D" id="3.90.550.10">
    <property type="entry name" value="Spore Coat Polysaccharide Biosynthesis Protein SpsA, Chain A"/>
    <property type="match status" value="1"/>
</dbReference>
<dbReference type="InterPro" id="IPR049577">
    <property type="entry name" value="GMPP_N"/>
</dbReference>
<dbReference type="InterPro" id="IPR006375">
    <property type="entry name" value="Man1P_GuaTrfase/Man6P_Isoase"/>
</dbReference>
<dbReference type="InterPro" id="IPR001538">
    <property type="entry name" value="Man6P_isomerase-2_C"/>
</dbReference>
<dbReference type="InterPro" id="IPR054566">
    <property type="entry name" value="ManC/GMP-like_b-helix"/>
</dbReference>
<dbReference type="InterPro" id="IPR051161">
    <property type="entry name" value="Mannose-6P_isomerase_type2"/>
</dbReference>
<dbReference type="InterPro" id="IPR005835">
    <property type="entry name" value="NTP_transferase_dom"/>
</dbReference>
<dbReference type="InterPro" id="IPR029044">
    <property type="entry name" value="Nucleotide-diphossugar_trans"/>
</dbReference>
<dbReference type="InterPro" id="IPR014710">
    <property type="entry name" value="RmlC-like_jellyroll"/>
</dbReference>
<dbReference type="InterPro" id="IPR011051">
    <property type="entry name" value="RmlC_Cupin_sf"/>
</dbReference>
<dbReference type="NCBIfam" id="TIGR01479">
    <property type="entry name" value="GMP_PMI"/>
    <property type="match status" value="1"/>
</dbReference>
<dbReference type="PANTHER" id="PTHR46390">
    <property type="entry name" value="MANNOSE-1-PHOSPHATE GUANYLYLTRANSFERASE"/>
    <property type="match status" value="1"/>
</dbReference>
<dbReference type="PANTHER" id="PTHR46390:SF1">
    <property type="entry name" value="MANNOSE-1-PHOSPHATE GUANYLYLTRANSFERASE"/>
    <property type="match status" value="1"/>
</dbReference>
<dbReference type="Pfam" id="PF22640">
    <property type="entry name" value="ManC_GMP_beta-helix"/>
    <property type="match status" value="1"/>
</dbReference>
<dbReference type="Pfam" id="PF01050">
    <property type="entry name" value="MannoseP_isomer"/>
    <property type="match status" value="1"/>
</dbReference>
<dbReference type="Pfam" id="PF00483">
    <property type="entry name" value="NTP_transferase"/>
    <property type="match status" value="1"/>
</dbReference>
<dbReference type="SUPFAM" id="SSF53448">
    <property type="entry name" value="Nucleotide-diphospho-sugar transferases"/>
    <property type="match status" value="1"/>
</dbReference>
<dbReference type="SUPFAM" id="SSF51182">
    <property type="entry name" value="RmlC-like cupins"/>
    <property type="match status" value="1"/>
</dbReference>